<proteinExistence type="inferred from homology"/>
<gene>
    <name evidence="1" type="primary">rnhA</name>
    <name type="ordered locus">SARI_02739</name>
</gene>
<reference key="1">
    <citation type="submission" date="2007-11" db="EMBL/GenBank/DDBJ databases">
        <authorList>
            <consortium name="The Salmonella enterica serovar Arizonae Genome Sequencing Project"/>
            <person name="McClelland M."/>
            <person name="Sanderson E.K."/>
            <person name="Porwollik S."/>
            <person name="Spieth J."/>
            <person name="Clifton W.S."/>
            <person name="Fulton R."/>
            <person name="Chunyan W."/>
            <person name="Wollam A."/>
            <person name="Shah N."/>
            <person name="Pepin K."/>
            <person name="Bhonagiri V."/>
            <person name="Nash W."/>
            <person name="Johnson M."/>
            <person name="Thiruvilangam P."/>
            <person name="Wilson R."/>
        </authorList>
    </citation>
    <scope>NUCLEOTIDE SEQUENCE [LARGE SCALE GENOMIC DNA]</scope>
    <source>
        <strain>ATCC BAA-731 / CDC346-86 / RSK2980</strain>
    </source>
</reference>
<name>RNH_SALAR</name>
<organism>
    <name type="scientific">Salmonella arizonae (strain ATCC BAA-731 / CDC346-86 / RSK2980)</name>
    <dbReference type="NCBI Taxonomy" id="41514"/>
    <lineage>
        <taxon>Bacteria</taxon>
        <taxon>Pseudomonadati</taxon>
        <taxon>Pseudomonadota</taxon>
        <taxon>Gammaproteobacteria</taxon>
        <taxon>Enterobacterales</taxon>
        <taxon>Enterobacteriaceae</taxon>
        <taxon>Salmonella</taxon>
    </lineage>
</organism>
<keyword id="KW-0963">Cytoplasm</keyword>
<keyword id="KW-0255">Endonuclease</keyword>
<keyword id="KW-0378">Hydrolase</keyword>
<keyword id="KW-0460">Magnesium</keyword>
<keyword id="KW-0479">Metal-binding</keyword>
<keyword id="KW-0540">Nuclease</keyword>
<keyword id="KW-1185">Reference proteome</keyword>
<dbReference type="EC" id="3.1.26.4" evidence="1"/>
<dbReference type="EMBL" id="CP000880">
    <property type="protein sequence ID" value="ABX22594.1"/>
    <property type="molecule type" value="Genomic_DNA"/>
</dbReference>
<dbReference type="SMR" id="A9MPF1"/>
<dbReference type="STRING" id="41514.SARI_02739"/>
<dbReference type="KEGG" id="ses:SARI_02739"/>
<dbReference type="HOGENOM" id="CLU_030894_6_0_6"/>
<dbReference type="Proteomes" id="UP000002084">
    <property type="component" value="Chromosome"/>
</dbReference>
<dbReference type="GO" id="GO:0005737">
    <property type="term" value="C:cytoplasm"/>
    <property type="evidence" value="ECO:0007669"/>
    <property type="project" value="UniProtKB-SubCell"/>
</dbReference>
<dbReference type="GO" id="GO:0000287">
    <property type="term" value="F:magnesium ion binding"/>
    <property type="evidence" value="ECO:0007669"/>
    <property type="project" value="UniProtKB-UniRule"/>
</dbReference>
<dbReference type="GO" id="GO:0003676">
    <property type="term" value="F:nucleic acid binding"/>
    <property type="evidence" value="ECO:0007669"/>
    <property type="project" value="InterPro"/>
</dbReference>
<dbReference type="GO" id="GO:0004523">
    <property type="term" value="F:RNA-DNA hybrid ribonuclease activity"/>
    <property type="evidence" value="ECO:0007669"/>
    <property type="project" value="UniProtKB-UniRule"/>
</dbReference>
<dbReference type="GO" id="GO:0043137">
    <property type="term" value="P:DNA replication, removal of RNA primer"/>
    <property type="evidence" value="ECO:0007669"/>
    <property type="project" value="TreeGrafter"/>
</dbReference>
<dbReference type="CDD" id="cd09278">
    <property type="entry name" value="RNase_HI_prokaryote_like"/>
    <property type="match status" value="1"/>
</dbReference>
<dbReference type="FunFam" id="3.30.420.10:FF:000008">
    <property type="entry name" value="Ribonuclease H"/>
    <property type="match status" value="1"/>
</dbReference>
<dbReference type="Gene3D" id="3.30.420.10">
    <property type="entry name" value="Ribonuclease H-like superfamily/Ribonuclease H"/>
    <property type="match status" value="1"/>
</dbReference>
<dbReference type="HAMAP" id="MF_00042">
    <property type="entry name" value="RNase_H"/>
    <property type="match status" value="1"/>
</dbReference>
<dbReference type="InterPro" id="IPR050092">
    <property type="entry name" value="RNase_H"/>
</dbReference>
<dbReference type="InterPro" id="IPR012337">
    <property type="entry name" value="RNaseH-like_sf"/>
</dbReference>
<dbReference type="InterPro" id="IPR002156">
    <property type="entry name" value="RNaseH_domain"/>
</dbReference>
<dbReference type="InterPro" id="IPR036397">
    <property type="entry name" value="RNaseH_sf"/>
</dbReference>
<dbReference type="InterPro" id="IPR022892">
    <property type="entry name" value="RNaseHI"/>
</dbReference>
<dbReference type="NCBIfam" id="NF001236">
    <property type="entry name" value="PRK00203.1"/>
    <property type="match status" value="1"/>
</dbReference>
<dbReference type="PANTHER" id="PTHR10642">
    <property type="entry name" value="RIBONUCLEASE H1"/>
    <property type="match status" value="1"/>
</dbReference>
<dbReference type="PANTHER" id="PTHR10642:SF26">
    <property type="entry name" value="RIBONUCLEASE H1"/>
    <property type="match status" value="1"/>
</dbReference>
<dbReference type="Pfam" id="PF00075">
    <property type="entry name" value="RNase_H"/>
    <property type="match status" value="1"/>
</dbReference>
<dbReference type="SUPFAM" id="SSF53098">
    <property type="entry name" value="Ribonuclease H-like"/>
    <property type="match status" value="1"/>
</dbReference>
<dbReference type="PROSITE" id="PS50879">
    <property type="entry name" value="RNASE_H_1"/>
    <property type="match status" value="1"/>
</dbReference>
<comment type="function">
    <text evidence="1">Endonuclease that specifically degrades the RNA of RNA-DNA hybrids.</text>
</comment>
<comment type="catalytic activity">
    <reaction evidence="1">
        <text>Endonucleolytic cleavage to 5'-phosphomonoester.</text>
        <dbReference type="EC" id="3.1.26.4"/>
    </reaction>
</comment>
<comment type="cofactor">
    <cofactor evidence="1">
        <name>Mg(2+)</name>
        <dbReference type="ChEBI" id="CHEBI:18420"/>
    </cofactor>
    <text evidence="1">Binds 1 Mg(2+) ion per subunit. May bind a second metal ion at a regulatory site, or after substrate binding.</text>
</comment>
<comment type="subunit">
    <text evidence="1">Monomer.</text>
</comment>
<comment type="subcellular location">
    <subcellularLocation>
        <location evidence="1">Cytoplasm</location>
    </subcellularLocation>
</comment>
<comment type="similarity">
    <text evidence="1">Belongs to the RNase H family.</text>
</comment>
<accession>A9MPF1</accession>
<feature type="chain" id="PRO_1000074662" description="Ribonuclease H">
    <location>
        <begin position="1"/>
        <end position="155"/>
    </location>
</feature>
<feature type="domain" description="RNase H type-1" evidence="2">
    <location>
        <begin position="1"/>
        <end position="142"/>
    </location>
</feature>
<feature type="binding site" evidence="1">
    <location>
        <position position="10"/>
    </location>
    <ligand>
        <name>Mg(2+)</name>
        <dbReference type="ChEBI" id="CHEBI:18420"/>
        <label>1</label>
    </ligand>
</feature>
<feature type="binding site" evidence="1">
    <location>
        <position position="10"/>
    </location>
    <ligand>
        <name>Mg(2+)</name>
        <dbReference type="ChEBI" id="CHEBI:18420"/>
        <label>2</label>
    </ligand>
</feature>
<feature type="binding site" evidence="1">
    <location>
        <position position="48"/>
    </location>
    <ligand>
        <name>Mg(2+)</name>
        <dbReference type="ChEBI" id="CHEBI:18420"/>
        <label>1</label>
    </ligand>
</feature>
<feature type="binding site" evidence="1">
    <location>
        <position position="70"/>
    </location>
    <ligand>
        <name>Mg(2+)</name>
        <dbReference type="ChEBI" id="CHEBI:18420"/>
        <label>1</label>
    </ligand>
</feature>
<feature type="binding site" evidence="1">
    <location>
        <position position="134"/>
    </location>
    <ligand>
        <name>Mg(2+)</name>
        <dbReference type="ChEBI" id="CHEBI:18420"/>
        <label>2</label>
    </ligand>
</feature>
<sequence length="155" mass="17510">MLKQVEIFTDGSCLGNPGPGGYGAILRYRGHEKTFSEGYTLTTNNRMELMAAIVALEALKEHCEVTLSTDSQYVRQGITQWIHNWKKRGWKTAEKKPVKNVDLWKRLDAALGQHQIKWVWVKGHAGHPENERCDELARAAAMNPTQEDSGYQAEA</sequence>
<evidence type="ECO:0000255" key="1">
    <source>
        <dbReference type="HAMAP-Rule" id="MF_00042"/>
    </source>
</evidence>
<evidence type="ECO:0000255" key="2">
    <source>
        <dbReference type="PROSITE-ProRule" id="PRU00408"/>
    </source>
</evidence>
<protein>
    <recommendedName>
        <fullName evidence="1">Ribonuclease H</fullName>
        <shortName evidence="1">RNase H</shortName>
        <ecNumber evidence="1">3.1.26.4</ecNumber>
    </recommendedName>
</protein>